<reference key="1">
    <citation type="submission" date="2004-06" db="EMBL/GenBank/DDBJ databases">
        <authorList>
            <consortium name="NIH - Xenopus Gene Collection (XGC) project"/>
        </authorList>
    </citation>
    <scope>NUCLEOTIDE SEQUENCE [LARGE SCALE MRNA]</scope>
    <source>
        <tissue>Kidney</tissue>
    </source>
</reference>
<gene>
    <name type="primary">cpsf4</name>
</gene>
<organism>
    <name type="scientific">Xenopus laevis</name>
    <name type="common">African clawed frog</name>
    <dbReference type="NCBI Taxonomy" id="8355"/>
    <lineage>
        <taxon>Eukaryota</taxon>
        <taxon>Metazoa</taxon>
        <taxon>Chordata</taxon>
        <taxon>Craniata</taxon>
        <taxon>Vertebrata</taxon>
        <taxon>Euteleostomi</taxon>
        <taxon>Amphibia</taxon>
        <taxon>Batrachia</taxon>
        <taxon>Anura</taxon>
        <taxon>Pipoidea</taxon>
        <taxon>Pipidae</taxon>
        <taxon>Xenopodinae</taxon>
        <taxon>Xenopus</taxon>
        <taxon>Xenopus</taxon>
    </lineage>
</organism>
<keyword id="KW-0479">Metal-binding</keyword>
<keyword id="KW-0507">mRNA processing</keyword>
<keyword id="KW-0539">Nucleus</keyword>
<keyword id="KW-1185">Reference proteome</keyword>
<keyword id="KW-0677">Repeat</keyword>
<keyword id="KW-0694">RNA-binding</keyword>
<keyword id="KW-0862">Zinc</keyword>
<keyword id="KW-0863">Zinc-finger</keyword>
<evidence type="ECO:0000250" key="1"/>
<evidence type="ECO:0000255" key="2">
    <source>
        <dbReference type="PROSITE-ProRule" id="PRU00047"/>
    </source>
</evidence>
<evidence type="ECO:0000255" key="3">
    <source>
        <dbReference type="PROSITE-ProRule" id="PRU00723"/>
    </source>
</evidence>
<evidence type="ECO:0000256" key="4">
    <source>
        <dbReference type="SAM" id="MobiDB-lite"/>
    </source>
</evidence>
<evidence type="ECO:0000305" key="5"/>
<sequence length="269" mass="30492">MQELIACVDHLRFDLELAVEQQLGAQPLPFPGMDKSGAAVCEFFLKSACGKGGMCPFRHISGEKTVVCKHWLRGLCKKGDQCEFLHEYDMTKMPECYFYSKFGECSNKECPFLHIDPESKIKDCPWYDRGFCKHGPLCRHRHTRRVICVNYLVGFCIEGPNCKFMHPRFELPMGTAEQPPLPQQTQNQQKQNNNQVLQRSSSLIQLTSQNSPVSQQRSPQTIGVMQLQSGTQGNRGPRPLDQVTCYKCGEKGHYANRCTKGHLAFLSGQ</sequence>
<dbReference type="EMBL" id="BC075128">
    <property type="protein sequence ID" value="AAH75128.1"/>
    <property type="molecule type" value="mRNA"/>
</dbReference>
<dbReference type="RefSeq" id="NP_001086337.1">
    <property type="nucleotide sequence ID" value="NM_001092868.1"/>
</dbReference>
<dbReference type="SMR" id="Q6DJP7"/>
<dbReference type="DNASU" id="444766"/>
<dbReference type="GeneID" id="444766"/>
<dbReference type="KEGG" id="xla:444766"/>
<dbReference type="AGR" id="Xenbase:XB-GENE-948308"/>
<dbReference type="CTD" id="444766"/>
<dbReference type="Xenbase" id="XB-GENE-948308">
    <property type="gene designation" value="cpsf4.S"/>
</dbReference>
<dbReference type="OMA" id="FHQNNFA"/>
<dbReference type="OrthoDB" id="1914176at2759"/>
<dbReference type="Proteomes" id="UP000186698">
    <property type="component" value="Chromosome 9_10S"/>
</dbReference>
<dbReference type="Bgee" id="444766">
    <property type="expression patterns" value="Expressed in egg cell and 19 other cell types or tissues"/>
</dbReference>
<dbReference type="GO" id="GO:0005847">
    <property type="term" value="C:mRNA cleavage and polyadenylation specificity factor complex"/>
    <property type="evidence" value="ECO:0000250"/>
    <property type="project" value="UniProtKB"/>
</dbReference>
<dbReference type="GO" id="GO:0003723">
    <property type="term" value="F:RNA binding"/>
    <property type="evidence" value="ECO:0007669"/>
    <property type="project" value="UniProtKB-KW"/>
</dbReference>
<dbReference type="GO" id="GO:0008270">
    <property type="term" value="F:zinc ion binding"/>
    <property type="evidence" value="ECO:0007669"/>
    <property type="project" value="UniProtKB-KW"/>
</dbReference>
<dbReference type="GO" id="GO:0006397">
    <property type="term" value="P:mRNA processing"/>
    <property type="evidence" value="ECO:0007669"/>
    <property type="project" value="UniProtKB-KW"/>
</dbReference>
<dbReference type="FunFam" id="4.10.60.10:FF:000008">
    <property type="entry name" value="Cleavage and polyadenylation specificity factor subunit 4"/>
    <property type="match status" value="1"/>
</dbReference>
<dbReference type="FunFam" id="4.10.1000.10:FF:000005">
    <property type="entry name" value="cleavage and polyadenylation specificity factor subunit 4"/>
    <property type="match status" value="1"/>
</dbReference>
<dbReference type="FunFam" id="4.10.1000.10:FF:000019">
    <property type="entry name" value="cleavage and polyadenylation specificity factor subunit 4 isoform X2"/>
    <property type="match status" value="1"/>
</dbReference>
<dbReference type="Gene3D" id="4.10.1000.10">
    <property type="entry name" value="Zinc finger, CCCH-type"/>
    <property type="match status" value="2"/>
</dbReference>
<dbReference type="Gene3D" id="4.10.60.10">
    <property type="entry name" value="Zinc finger, CCHC-type"/>
    <property type="match status" value="1"/>
</dbReference>
<dbReference type="InterPro" id="IPR045348">
    <property type="entry name" value="CPSF4/Yth1"/>
</dbReference>
<dbReference type="InterPro" id="IPR041686">
    <property type="entry name" value="Znf-CCCH_3"/>
</dbReference>
<dbReference type="InterPro" id="IPR000571">
    <property type="entry name" value="Znf_CCCH"/>
</dbReference>
<dbReference type="InterPro" id="IPR036855">
    <property type="entry name" value="Znf_CCCH_sf"/>
</dbReference>
<dbReference type="InterPro" id="IPR001878">
    <property type="entry name" value="Znf_CCHC"/>
</dbReference>
<dbReference type="InterPro" id="IPR036875">
    <property type="entry name" value="Znf_CCHC_sf"/>
</dbReference>
<dbReference type="PANTHER" id="PTHR23102:SF26">
    <property type="entry name" value="CLEAVAGE AND POLYADENYLATION SPECIFICITY FACTOR SUBUNIT 4"/>
    <property type="match status" value="1"/>
</dbReference>
<dbReference type="PANTHER" id="PTHR23102">
    <property type="entry name" value="CLEAVAGE AND POLYADENYLATION SPECIFICITY FACTOR SUBUNIT 4-RELATED"/>
    <property type="match status" value="1"/>
</dbReference>
<dbReference type="Pfam" id="PF14608">
    <property type="entry name" value="zf-CCCH_2"/>
    <property type="match status" value="1"/>
</dbReference>
<dbReference type="Pfam" id="PF15663">
    <property type="entry name" value="zf-CCCH_3"/>
    <property type="match status" value="1"/>
</dbReference>
<dbReference type="Pfam" id="PF00098">
    <property type="entry name" value="zf-CCHC"/>
    <property type="match status" value="1"/>
</dbReference>
<dbReference type="SMART" id="SM00343">
    <property type="entry name" value="ZnF_C2HC"/>
    <property type="match status" value="1"/>
</dbReference>
<dbReference type="SMART" id="SM00356">
    <property type="entry name" value="ZnF_C3H1"/>
    <property type="match status" value="5"/>
</dbReference>
<dbReference type="SUPFAM" id="SSF90229">
    <property type="entry name" value="CCCH zinc finger"/>
    <property type="match status" value="2"/>
</dbReference>
<dbReference type="SUPFAM" id="SSF57756">
    <property type="entry name" value="Retrovirus zinc finger-like domains"/>
    <property type="match status" value="1"/>
</dbReference>
<dbReference type="PROSITE" id="PS50103">
    <property type="entry name" value="ZF_C3H1"/>
    <property type="match status" value="5"/>
</dbReference>
<dbReference type="PROSITE" id="PS50158">
    <property type="entry name" value="ZF_CCHC"/>
    <property type="match status" value="1"/>
</dbReference>
<proteinExistence type="evidence at transcript level"/>
<feature type="chain" id="PRO_0000317364" description="Cleavage and polyadenylation specificity factor subunit 4">
    <location>
        <begin position="1"/>
        <end position="269"/>
    </location>
</feature>
<feature type="zinc finger region" description="C3H1-type 1" evidence="3">
    <location>
        <begin position="35"/>
        <end position="61"/>
    </location>
</feature>
<feature type="zinc finger region" description="C3H1-type 2" evidence="3">
    <location>
        <begin position="62"/>
        <end position="89"/>
    </location>
</feature>
<feature type="zinc finger region" description="C3H1-type 3" evidence="3">
    <location>
        <begin position="90"/>
        <end position="117"/>
    </location>
</feature>
<feature type="zinc finger region" description="C3H1-type 4" evidence="3">
    <location>
        <begin position="118"/>
        <end position="145"/>
    </location>
</feature>
<feature type="zinc finger region" description="C3H1-type 5" evidence="3">
    <location>
        <begin position="146"/>
        <end position="169"/>
    </location>
</feature>
<feature type="zinc finger region" description="CCHC-type" evidence="2">
    <location>
        <begin position="243"/>
        <end position="260"/>
    </location>
</feature>
<feature type="region of interest" description="Disordered" evidence="4">
    <location>
        <begin position="173"/>
        <end position="197"/>
    </location>
</feature>
<feature type="compositionally biased region" description="Low complexity" evidence="4">
    <location>
        <begin position="183"/>
        <end position="197"/>
    </location>
</feature>
<comment type="function">
    <text evidence="1">Component of the cleavage and polyadenylation specificity factor (CPSF) complex that play a key role in pre-mRNA 3'-end formation, recognizing the AAUAAA signal sequence and interacting with poly(A) polymerase and other factors to bring about cleavage and poly(A) addition. Cpsf4 binds RNA polymers with a preference for poly(U) (By similarity).</text>
</comment>
<comment type="subunit">
    <text evidence="1">Component of the cleavage and polyadenylation specificity factor (CPSF) complex, composed of cpsf1, cpsf2, cpsf3, cpsf4 and fip1l1.</text>
</comment>
<comment type="subcellular location">
    <subcellularLocation>
        <location evidence="1">Nucleus</location>
    </subcellularLocation>
</comment>
<comment type="similarity">
    <text evidence="5">Belongs to the CPSF4/YTH1 family.</text>
</comment>
<protein>
    <recommendedName>
        <fullName>Cleavage and polyadenylation specificity factor subunit 4</fullName>
    </recommendedName>
</protein>
<name>CPSF4_XENLA</name>
<accession>Q6DJP7</accession>